<name>GRPE_CUPTR</name>
<sequence>MEDQKQTPSNQTATPAGDEATSTAAASPETGAPDTAAAAVDDVAAQLAALEAKASEHYDLYMRAVAEGENIRRRAQEDVAKAHKFAIENFADNLLPVMDSLQAALADGSGDIAKLREGVELTARQLAAAFERGKIVELNPVGEKFDPHRHQAISMVPADQEPNTVVTVLQRGYTIADRVLRPALVTVAAPK</sequence>
<accession>B3R450</accession>
<gene>
    <name evidence="1" type="primary">grpE</name>
    <name type="ordered locus">RALTA_A1117</name>
</gene>
<protein>
    <recommendedName>
        <fullName evidence="1">Protein GrpE</fullName>
    </recommendedName>
    <alternativeName>
        <fullName evidence="1">HSP-70 cofactor</fullName>
    </alternativeName>
</protein>
<keyword id="KW-0143">Chaperone</keyword>
<keyword id="KW-0963">Cytoplasm</keyword>
<keyword id="KW-0346">Stress response</keyword>
<organism>
    <name type="scientific">Cupriavidus taiwanensis (strain DSM 17343 / BCRC 17206 / CCUG 44338 / CIP 107171 / LMG 19424 / R1)</name>
    <name type="common">Ralstonia taiwanensis (strain LMG 19424)</name>
    <dbReference type="NCBI Taxonomy" id="977880"/>
    <lineage>
        <taxon>Bacteria</taxon>
        <taxon>Pseudomonadati</taxon>
        <taxon>Pseudomonadota</taxon>
        <taxon>Betaproteobacteria</taxon>
        <taxon>Burkholderiales</taxon>
        <taxon>Burkholderiaceae</taxon>
        <taxon>Cupriavidus</taxon>
    </lineage>
</organism>
<dbReference type="EMBL" id="CU633749">
    <property type="protein sequence ID" value="CAQ69082.1"/>
    <property type="molecule type" value="Genomic_DNA"/>
</dbReference>
<dbReference type="RefSeq" id="WP_012352411.1">
    <property type="nucleotide sequence ID" value="NC_010528.1"/>
</dbReference>
<dbReference type="SMR" id="B3R450"/>
<dbReference type="GeneID" id="29762968"/>
<dbReference type="KEGG" id="cti:RALTA_A1117"/>
<dbReference type="eggNOG" id="COG0576">
    <property type="taxonomic scope" value="Bacteria"/>
</dbReference>
<dbReference type="HOGENOM" id="CLU_057217_6_1_4"/>
<dbReference type="BioCyc" id="CTAI977880:RALTA_RS05330-MONOMER"/>
<dbReference type="Proteomes" id="UP000001692">
    <property type="component" value="Chromosome 1"/>
</dbReference>
<dbReference type="GO" id="GO:0005829">
    <property type="term" value="C:cytosol"/>
    <property type="evidence" value="ECO:0007669"/>
    <property type="project" value="TreeGrafter"/>
</dbReference>
<dbReference type="GO" id="GO:0000774">
    <property type="term" value="F:adenyl-nucleotide exchange factor activity"/>
    <property type="evidence" value="ECO:0007669"/>
    <property type="project" value="InterPro"/>
</dbReference>
<dbReference type="GO" id="GO:0042803">
    <property type="term" value="F:protein homodimerization activity"/>
    <property type="evidence" value="ECO:0007669"/>
    <property type="project" value="InterPro"/>
</dbReference>
<dbReference type="GO" id="GO:0051087">
    <property type="term" value="F:protein-folding chaperone binding"/>
    <property type="evidence" value="ECO:0007669"/>
    <property type="project" value="InterPro"/>
</dbReference>
<dbReference type="GO" id="GO:0051082">
    <property type="term" value="F:unfolded protein binding"/>
    <property type="evidence" value="ECO:0007669"/>
    <property type="project" value="TreeGrafter"/>
</dbReference>
<dbReference type="GO" id="GO:0006457">
    <property type="term" value="P:protein folding"/>
    <property type="evidence" value="ECO:0007669"/>
    <property type="project" value="InterPro"/>
</dbReference>
<dbReference type="CDD" id="cd00446">
    <property type="entry name" value="GrpE"/>
    <property type="match status" value="1"/>
</dbReference>
<dbReference type="FunFam" id="2.30.22.10:FF:000001">
    <property type="entry name" value="Protein GrpE"/>
    <property type="match status" value="1"/>
</dbReference>
<dbReference type="Gene3D" id="3.90.20.20">
    <property type="match status" value="1"/>
</dbReference>
<dbReference type="Gene3D" id="2.30.22.10">
    <property type="entry name" value="Head domain of nucleotide exchange factor GrpE"/>
    <property type="match status" value="1"/>
</dbReference>
<dbReference type="HAMAP" id="MF_01151">
    <property type="entry name" value="GrpE"/>
    <property type="match status" value="1"/>
</dbReference>
<dbReference type="InterPro" id="IPR000740">
    <property type="entry name" value="GrpE"/>
</dbReference>
<dbReference type="InterPro" id="IPR013805">
    <property type="entry name" value="GrpE_coiled_coil"/>
</dbReference>
<dbReference type="InterPro" id="IPR009012">
    <property type="entry name" value="GrpE_head"/>
</dbReference>
<dbReference type="NCBIfam" id="NF010737">
    <property type="entry name" value="PRK14139.1"/>
    <property type="match status" value="1"/>
</dbReference>
<dbReference type="NCBIfam" id="NF010738">
    <property type="entry name" value="PRK14140.1"/>
    <property type="match status" value="1"/>
</dbReference>
<dbReference type="NCBIfam" id="NF010748">
    <property type="entry name" value="PRK14150.1"/>
    <property type="match status" value="1"/>
</dbReference>
<dbReference type="PANTHER" id="PTHR21237">
    <property type="entry name" value="GRPE PROTEIN"/>
    <property type="match status" value="1"/>
</dbReference>
<dbReference type="PANTHER" id="PTHR21237:SF23">
    <property type="entry name" value="GRPE PROTEIN HOMOLOG, MITOCHONDRIAL"/>
    <property type="match status" value="1"/>
</dbReference>
<dbReference type="Pfam" id="PF01025">
    <property type="entry name" value="GrpE"/>
    <property type="match status" value="1"/>
</dbReference>
<dbReference type="PRINTS" id="PR00773">
    <property type="entry name" value="GRPEPROTEIN"/>
</dbReference>
<dbReference type="SUPFAM" id="SSF58014">
    <property type="entry name" value="Coiled-coil domain of nucleotide exchange factor GrpE"/>
    <property type="match status" value="1"/>
</dbReference>
<dbReference type="SUPFAM" id="SSF51064">
    <property type="entry name" value="Head domain of nucleotide exchange factor GrpE"/>
    <property type="match status" value="1"/>
</dbReference>
<dbReference type="PROSITE" id="PS01071">
    <property type="entry name" value="GRPE"/>
    <property type="match status" value="1"/>
</dbReference>
<comment type="function">
    <text evidence="1">Participates actively in the response to hyperosmotic and heat shock by preventing the aggregation of stress-denatured proteins, in association with DnaK and GrpE. It is the nucleotide exchange factor for DnaK and may function as a thermosensor. Unfolded proteins bind initially to DnaJ; upon interaction with the DnaJ-bound protein, DnaK hydrolyzes its bound ATP, resulting in the formation of a stable complex. GrpE releases ADP from DnaK; ATP binding to DnaK triggers the release of the substrate protein, thus completing the reaction cycle. Several rounds of ATP-dependent interactions between DnaJ, DnaK and GrpE are required for fully efficient folding.</text>
</comment>
<comment type="subunit">
    <text evidence="1">Homodimer.</text>
</comment>
<comment type="subcellular location">
    <subcellularLocation>
        <location evidence="1">Cytoplasm</location>
    </subcellularLocation>
</comment>
<comment type="similarity">
    <text evidence="1">Belongs to the GrpE family.</text>
</comment>
<proteinExistence type="inferred from homology"/>
<evidence type="ECO:0000255" key="1">
    <source>
        <dbReference type="HAMAP-Rule" id="MF_01151"/>
    </source>
</evidence>
<evidence type="ECO:0000256" key="2">
    <source>
        <dbReference type="SAM" id="MobiDB-lite"/>
    </source>
</evidence>
<feature type="chain" id="PRO_1000164186" description="Protein GrpE">
    <location>
        <begin position="1"/>
        <end position="191"/>
    </location>
</feature>
<feature type="region of interest" description="Disordered" evidence="2">
    <location>
        <begin position="1"/>
        <end position="35"/>
    </location>
</feature>
<feature type="compositionally biased region" description="Polar residues" evidence="2">
    <location>
        <begin position="1"/>
        <end position="14"/>
    </location>
</feature>
<feature type="compositionally biased region" description="Low complexity" evidence="2">
    <location>
        <begin position="19"/>
        <end position="35"/>
    </location>
</feature>
<reference key="1">
    <citation type="journal article" date="2008" name="Genome Res.">
        <title>Genome sequence of the beta-rhizobium Cupriavidus taiwanensis and comparative genomics of rhizobia.</title>
        <authorList>
            <person name="Amadou C."/>
            <person name="Pascal G."/>
            <person name="Mangenot S."/>
            <person name="Glew M."/>
            <person name="Bontemps C."/>
            <person name="Capela D."/>
            <person name="Carrere S."/>
            <person name="Cruveiller S."/>
            <person name="Dossat C."/>
            <person name="Lajus A."/>
            <person name="Marchetti M."/>
            <person name="Poinsot V."/>
            <person name="Rouy Z."/>
            <person name="Servin B."/>
            <person name="Saad M."/>
            <person name="Schenowitz C."/>
            <person name="Barbe V."/>
            <person name="Batut J."/>
            <person name="Medigue C."/>
            <person name="Masson-Boivin C."/>
        </authorList>
    </citation>
    <scope>NUCLEOTIDE SEQUENCE [LARGE SCALE GENOMIC DNA]</scope>
    <source>
        <strain>DSM 17343 / BCRC 17206 / CCUG 44338 / CIP 107171 / LMG 19424 / R1</strain>
    </source>
</reference>